<protein>
    <recommendedName>
        <fullName evidence="11">CMRF-35-like molecule 4</fullName>
        <shortName evidence="11">CLM-4</shortName>
    </recommendedName>
    <alternativeName>
        <fullName evidence="13">CD300C molecule 2</fullName>
    </alternativeName>
    <alternativeName>
        <fullName>Dendritic cell-derived Ig-like receptor 1</fullName>
        <shortName evidence="8">DIgR1</shortName>
    </alternativeName>
    <alternativeName>
        <fullName>Immunoglobulin superfamily member 7</fullName>
        <shortName>IgSF7</shortName>
    </alternativeName>
    <alternativeName>
        <fullName evidence="10">Leukocyte mono-Ig-like receptor 2</fullName>
    </alternativeName>
    <alternativeName>
        <fullName>Myeloid-associated immunoglobulin-like receptor 2</fullName>
        <shortName>MAIR-2</shortName>
        <shortName evidence="9">MAIR-II</shortName>
    </alternativeName>
</protein>
<dbReference type="EMBL" id="AB098476">
    <property type="protein sequence ID" value="BAC80269.1"/>
    <property type="molecule type" value="mRNA"/>
</dbReference>
<dbReference type="EMBL" id="AB091767">
    <property type="protein sequence ID" value="BAC77076.1"/>
    <property type="molecule type" value="mRNA"/>
</dbReference>
<dbReference type="EMBL" id="AB091768">
    <property type="protein sequence ID" value="BAC77077.1"/>
    <property type="molecule type" value="mRNA"/>
</dbReference>
<dbReference type="EMBL" id="AY457050">
    <property type="protein sequence ID" value="AAR27941.1"/>
    <property type="molecule type" value="mRNA"/>
</dbReference>
<dbReference type="EMBL" id="AL607025">
    <property type="status" value="NOT_ANNOTATED_CDS"/>
    <property type="molecule type" value="Genomic_DNA"/>
</dbReference>
<dbReference type="EMBL" id="BC006801">
    <property type="protein sequence ID" value="AAH06801.1"/>
    <property type="molecule type" value="mRNA"/>
</dbReference>
<dbReference type="CCDS" id="CCDS25616.1"/>
<dbReference type="PIR" id="JC7761">
    <property type="entry name" value="JC7761"/>
</dbReference>
<dbReference type="RefSeq" id="NP_598919.1">
    <property type="nucleotide sequence ID" value="NM_134158.2"/>
</dbReference>
<dbReference type="SMR" id="Q7TSN2"/>
<dbReference type="BioGRID" id="228270">
    <property type="interactions" value="3"/>
</dbReference>
<dbReference type="FunCoup" id="Q7TSN2">
    <property type="interactions" value="1215"/>
</dbReference>
<dbReference type="STRING" id="10090.ENSMUSP00000090121"/>
<dbReference type="GlyCosmos" id="Q7TSN2">
    <property type="glycosylation" value="1 site, No reported glycans"/>
</dbReference>
<dbReference type="GlyGen" id="Q7TSN2">
    <property type="glycosylation" value="1 site"/>
</dbReference>
<dbReference type="PaxDb" id="10090-ENSMUSP00000090121"/>
<dbReference type="ProteomicsDB" id="279114"/>
<dbReference type="DNASU" id="140497"/>
<dbReference type="Ensembl" id="ENSMUST00000092464.10">
    <property type="protein sequence ID" value="ENSMUSP00000090121.4"/>
    <property type="gene ID" value="ENSMUSG00000044811.15"/>
</dbReference>
<dbReference type="GeneID" id="140497"/>
<dbReference type="KEGG" id="mmu:140497"/>
<dbReference type="AGR" id="MGI:2153249"/>
<dbReference type="CTD" id="140497"/>
<dbReference type="MGI" id="MGI:2153249">
    <property type="gene designation" value="Cd300c2"/>
</dbReference>
<dbReference type="VEuPathDB" id="HostDB:ENSMUSG00000044811"/>
<dbReference type="eggNOG" id="ENOG502S8BD">
    <property type="taxonomic scope" value="Eukaryota"/>
</dbReference>
<dbReference type="GeneTree" id="ENSGT00940000159622"/>
<dbReference type="HOGENOM" id="CLU_051023_3_0_1"/>
<dbReference type="InParanoid" id="Q7TSN2"/>
<dbReference type="OMA" id="LQCDKIV"/>
<dbReference type="OrthoDB" id="8959642at2759"/>
<dbReference type="TreeFam" id="TF334441"/>
<dbReference type="Reactome" id="R-MMU-198933">
    <property type="pathway name" value="Immunoregulatory interactions between a Lymphoid and a non-Lymphoid cell"/>
</dbReference>
<dbReference type="Reactome" id="R-MMU-6798695">
    <property type="pathway name" value="Neutrophil degranulation"/>
</dbReference>
<dbReference type="BioGRID-ORCS" id="140497">
    <property type="hits" value="1 hit in 75 CRISPR screens"/>
</dbReference>
<dbReference type="ChiTaRS" id="Cd300c">
    <property type="organism name" value="mouse"/>
</dbReference>
<dbReference type="PRO" id="PR:Q7TSN2"/>
<dbReference type="Proteomes" id="UP000000589">
    <property type="component" value="Chromosome 11"/>
</dbReference>
<dbReference type="RNAct" id="Q7TSN2">
    <property type="molecule type" value="protein"/>
</dbReference>
<dbReference type="Bgee" id="ENSMUSG00000044811">
    <property type="expression patterns" value="Expressed in stroma of bone marrow and 112 other cell types or tissues"/>
</dbReference>
<dbReference type="ExpressionAtlas" id="Q7TSN2">
    <property type="expression patterns" value="baseline and differential"/>
</dbReference>
<dbReference type="GO" id="GO:0005886">
    <property type="term" value="C:plasma membrane"/>
    <property type="evidence" value="ECO:0000314"/>
    <property type="project" value="MGI"/>
</dbReference>
<dbReference type="GO" id="GO:0002376">
    <property type="term" value="P:immune system process"/>
    <property type="evidence" value="ECO:0007669"/>
    <property type="project" value="UniProtKB-KW"/>
</dbReference>
<dbReference type="GO" id="GO:0001819">
    <property type="term" value="P:positive regulation of cytokine production"/>
    <property type="evidence" value="ECO:0000314"/>
    <property type="project" value="MGI"/>
</dbReference>
<dbReference type="CDD" id="cd05716">
    <property type="entry name" value="IgV_pIgR_like"/>
    <property type="match status" value="1"/>
</dbReference>
<dbReference type="FunFam" id="2.60.40.10:FF:000370">
    <property type="entry name" value="CMRF35-like molecule 1"/>
    <property type="match status" value="1"/>
</dbReference>
<dbReference type="Gene3D" id="2.60.40.10">
    <property type="entry name" value="Immunoglobulins"/>
    <property type="match status" value="1"/>
</dbReference>
<dbReference type="InterPro" id="IPR050671">
    <property type="entry name" value="CD300_family_receptors"/>
</dbReference>
<dbReference type="InterPro" id="IPR007110">
    <property type="entry name" value="Ig-like_dom"/>
</dbReference>
<dbReference type="InterPro" id="IPR036179">
    <property type="entry name" value="Ig-like_dom_sf"/>
</dbReference>
<dbReference type="InterPro" id="IPR013783">
    <property type="entry name" value="Ig-like_fold"/>
</dbReference>
<dbReference type="InterPro" id="IPR003599">
    <property type="entry name" value="Ig_sub"/>
</dbReference>
<dbReference type="InterPro" id="IPR013106">
    <property type="entry name" value="Ig_V-set"/>
</dbReference>
<dbReference type="PANTHER" id="PTHR11860">
    <property type="entry name" value="POLYMERIC-IMMUNOGLOBULIN RECEPTOR"/>
    <property type="match status" value="1"/>
</dbReference>
<dbReference type="PANTHER" id="PTHR11860:SF117">
    <property type="entry name" value="PROTEIN CD300H"/>
    <property type="match status" value="1"/>
</dbReference>
<dbReference type="Pfam" id="PF07686">
    <property type="entry name" value="V-set"/>
    <property type="match status" value="1"/>
</dbReference>
<dbReference type="SMART" id="SM00409">
    <property type="entry name" value="IG"/>
    <property type="match status" value="1"/>
</dbReference>
<dbReference type="SUPFAM" id="SSF48726">
    <property type="entry name" value="Immunoglobulin"/>
    <property type="match status" value="1"/>
</dbReference>
<dbReference type="PROSITE" id="PS50835">
    <property type="entry name" value="IG_LIKE"/>
    <property type="match status" value="1"/>
</dbReference>
<accession>Q7TSN2</accession>
<accession>Q7TN55</accession>
<accession>Q8JZM5</accession>
<organism>
    <name type="scientific">Mus musculus</name>
    <name type="common">Mouse</name>
    <dbReference type="NCBI Taxonomy" id="10090"/>
    <lineage>
        <taxon>Eukaryota</taxon>
        <taxon>Metazoa</taxon>
        <taxon>Chordata</taxon>
        <taxon>Craniata</taxon>
        <taxon>Vertebrata</taxon>
        <taxon>Euteleostomi</taxon>
        <taxon>Mammalia</taxon>
        <taxon>Eutheria</taxon>
        <taxon>Euarchontoglires</taxon>
        <taxon>Glires</taxon>
        <taxon>Rodentia</taxon>
        <taxon>Myomorpha</taxon>
        <taxon>Muroidea</taxon>
        <taxon>Muridae</taxon>
        <taxon>Murinae</taxon>
        <taxon>Mus</taxon>
        <taxon>Mus</taxon>
    </lineage>
</organism>
<comment type="function">
    <text evidence="5 6 7">Acts as an activating receptor in mast cells and macrophages.</text>
</comment>
<comment type="subunit">
    <text evidence="5 6 7">Interacts with TYROBP, HCST and FcR gamma.</text>
</comment>
<comment type="subcellular location">
    <subcellularLocation>
        <location evidence="4 6">Cell membrane</location>
        <topology evidence="4 6">Single-pass type I membrane protein</topology>
    </subcellularLocation>
</comment>
<comment type="tissue specificity">
    <text evidence="4 5 6">Present on the surface of mast cells, dendritic cells, peritoneal macrophages and a subset of B-cells (at protein level).</text>
</comment>
<comment type="similarity">
    <text evidence="12">Belongs to the CD300 family.</text>
</comment>
<feature type="signal peptide" evidence="1">
    <location>
        <begin position="1"/>
        <end position="24"/>
    </location>
</feature>
<feature type="chain" id="PRO_0000320127" description="CMRF-35-like molecule 4">
    <location>
        <begin position="25"/>
        <end position="228"/>
    </location>
</feature>
<feature type="topological domain" description="Extracellular" evidence="1">
    <location>
        <begin position="25"/>
        <end position="187"/>
    </location>
</feature>
<feature type="transmembrane region" description="Helical" evidence="1">
    <location>
        <begin position="188"/>
        <end position="208"/>
    </location>
</feature>
<feature type="topological domain" description="Cytoplasmic" evidence="1">
    <location>
        <begin position="209"/>
        <end position="228"/>
    </location>
</feature>
<feature type="domain" description="Ig-like V-type">
    <location>
        <begin position="25"/>
        <end position="126"/>
    </location>
</feature>
<feature type="region of interest" description="Disordered" evidence="3">
    <location>
        <begin position="139"/>
        <end position="174"/>
    </location>
</feature>
<feature type="compositionally biased region" description="Polar residues" evidence="3">
    <location>
        <begin position="154"/>
        <end position="170"/>
    </location>
</feature>
<feature type="site" description="Interaction with TYROBP or FcR gamma">
    <location>
        <position position="195"/>
    </location>
</feature>
<feature type="glycosylation site" description="N-linked (GlcNAc...) asparagine" evidence="1">
    <location>
        <position position="90"/>
    </location>
</feature>
<feature type="disulfide bond" evidence="2">
    <location>
        <begin position="43"/>
        <end position="110"/>
    </location>
</feature>
<feature type="mutagenesis site" description="Abolishes interaction with TYROBP or FcR gamma." evidence="7">
    <original>K</original>
    <variation>A</variation>
    <location>
        <position position="195"/>
    </location>
</feature>
<feature type="sequence conflict" description="In Ref. 2; BAC80269." evidence="12" ref="2">
    <original>A</original>
    <variation>T</variation>
    <location>
        <position position="34"/>
    </location>
</feature>
<feature type="sequence conflict" description="In Ref. 2; BAC80269." evidence="12" ref="2">
    <original>E</original>
    <variation>K</variation>
    <location>
        <position position="37"/>
    </location>
</feature>
<feature type="sequence conflict" description="In Ref. 3; BAC77077." evidence="12" ref="3">
    <original>D</original>
    <variation>DPV</variation>
    <location>
        <position position="138"/>
    </location>
</feature>
<feature type="sequence conflict" description="In Ref. 2; BAC80269." evidence="12" ref="2">
    <original>A</original>
    <variation>T</variation>
    <location>
        <position position="174"/>
    </location>
</feature>
<feature type="sequence conflict" description="In Ref. 2; BAC80269." evidence="12" ref="2">
    <original>W</original>
    <variation>R</variation>
    <location>
        <position position="189"/>
    </location>
</feature>
<feature type="sequence conflict" description="In Ref. 2; BAC80269." evidence="12" ref="2">
    <original>R</original>
    <variation>K</variation>
    <location>
        <position position="214"/>
    </location>
</feature>
<feature type="sequence conflict" description="In Ref. 2; BAC80269." evidence="12" ref="2">
    <original>SR</original>
    <variation>TQ</variation>
    <location>
        <begin position="221"/>
        <end position="222"/>
    </location>
</feature>
<keyword id="KW-1003">Cell membrane</keyword>
<keyword id="KW-1015">Disulfide bond</keyword>
<keyword id="KW-0325">Glycoprotein</keyword>
<keyword id="KW-0391">Immunity</keyword>
<keyword id="KW-0393">Immunoglobulin domain</keyword>
<keyword id="KW-0472">Membrane</keyword>
<keyword id="KW-0675">Receptor</keyword>
<keyword id="KW-1185">Reference proteome</keyword>
<keyword id="KW-0732">Signal</keyword>
<keyword id="KW-0812">Transmembrane</keyword>
<keyword id="KW-1133">Transmembrane helix</keyword>
<proteinExistence type="evidence at protein level"/>
<name>CLM4_MOUSE</name>
<reference key="1">
    <citation type="journal article" date="2001" name="Biochem. Biophys. Res. Commun.">
        <title>DIgR1, a novel membrane receptor of the immunoglobulin gene superfamily, is preferentially expressed by antigen-presenting cells.</title>
        <authorList>
            <person name="Luo K."/>
            <person name="Zhang W."/>
            <person name="Sui L."/>
            <person name="Li N."/>
            <person name="Zhang M."/>
            <person name="Ma X."/>
            <person name="Zhang L."/>
            <person name="Cao X."/>
        </authorList>
    </citation>
    <scope>NUCLEOTIDE SEQUENCE [MRNA]</scope>
    <scope>TISSUE SPECIFICITY</scope>
    <scope>SUBCELLULAR LOCATION</scope>
    <source>
        <tissue>Dendritic cell</tissue>
    </source>
</reference>
<reference key="2">
    <citation type="journal article" date="2003" name="Biochem. Biophys. Res. Commun.">
        <title>Identification and characterization of a new pair of immunoglobulin-like receptors LMIR1 and 2 derived from murine bone marrow-derived mast cells.</title>
        <authorList>
            <person name="Kumagai H."/>
            <person name="Oki T."/>
            <person name="Tamitsu K."/>
            <person name="Feng S.-Z."/>
            <person name="Ono M."/>
            <person name="Nakajima H."/>
            <person name="Bao Y.-C."/>
            <person name="Kawakami Y."/>
            <person name="Nagayoshi K."/>
            <person name="Copeland N.G."/>
            <person name="Gilbert D.J."/>
            <person name="Jenkins N.A."/>
            <person name="Kawakami T."/>
            <person name="Kitamura T."/>
        </authorList>
    </citation>
    <scope>NUCLEOTIDE SEQUENCE [MRNA]</scope>
    <scope>FUNCTION</scope>
    <scope>TISSUE SPECIFICITY</scope>
    <scope>SUBCELLULAR LOCATION</scope>
    <scope>INTERACTION WITH TYROBP; HCST AND FCR GAMMA</scope>
    <source>
        <strain>CBA/J</strain>
        <tissue>Mast cell</tissue>
    </source>
</reference>
<reference key="3">
    <citation type="journal article" date="2003" name="J. Exp. Med.">
        <title>Paired activating and inhibitory immunoglobulin-like receptors, MAIR-I and MAIR-II, regulate mast cell and macrophage activation.</title>
        <authorList>
            <person name="Yotsumoto K."/>
            <person name="Okoshi Y."/>
            <person name="Shibuya K."/>
            <person name="Yamazaki S."/>
            <person name="Tahara-Hanaoka S."/>
            <person name="Honda S."/>
            <person name="Osawa M."/>
            <person name="Kuroiwa A."/>
            <person name="Matsuda Y."/>
            <person name="Tenen D.G."/>
            <person name="Iwama A."/>
            <person name="Nakauchi H."/>
            <person name="Shibuya A."/>
        </authorList>
    </citation>
    <scope>NUCLEOTIDE SEQUENCE [MRNA]</scope>
    <scope>FUNCTION</scope>
    <scope>TISSUE SPECIFICITY</scope>
    <scope>INTERACTION WITH TYROBP</scope>
</reference>
<reference key="4">
    <citation type="journal article" date="2003" name="J. Immunol.">
        <title>CMRF-35-like molecule-1, a novel mouse myeloid receptor, can inhibit osteoclast formation.</title>
        <authorList>
            <person name="Chung D.-H."/>
            <person name="Humphrey M.B."/>
            <person name="Nakamura M.C."/>
            <person name="Ginzinger D.G."/>
            <person name="Seaman W.E."/>
            <person name="Daws M.R."/>
        </authorList>
    </citation>
    <scope>NUCLEOTIDE SEQUENCE [MRNA]</scope>
    <source>
        <strain>C57BL/6J</strain>
    </source>
</reference>
<reference key="5">
    <citation type="journal article" date="2009" name="PLoS Biol.">
        <title>Lineage-specific biology revealed by a finished genome assembly of the mouse.</title>
        <authorList>
            <person name="Church D.M."/>
            <person name="Goodstadt L."/>
            <person name="Hillier L.W."/>
            <person name="Zody M.C."/>
            <person name="Goldstein S."/>
            <person name="She X."/>
            <person name="Bult C.J."/>
            <person name="Agarwala R."/>
            <person name="Cherry J.L."/>
            <person name="DiCuccio M."/>
            <person name="Hlavina W."/>
            <person name="Kapustin Y."/>
            <person name="Meric P."/>
            <person name="Maglott D."/>
            <person name="Birtle Z."/>
            <person name="Marques A.C."/>
            <person name="Graves T."/>
            <person name="Zhou S."/>
            <person name="Teague B."/>
            <person name="Potamousis K."/>
            <person name="Churas C."/>
            <person name="Place M."/>
            <person name="Herschleb J."/>
            <person name="Runnheim R."/>
            <person name="Forrest D."/>
            <person name="Amos-Landgraf J."/>
            <person name="Schwartz D.C."/>
            <person name="Cheng Z."/>
            <person name="Lindblad-Toh K."/>
            <person name="Eichler E.E."/>
            <person name="Ponting C.P."/>
        </authorList>
    </citation>
    <scope>NUCLEOTIDE SEQUENCE [LARGE SCALE GENOMIC DNA]</scope>
    <source>
        <strain>C57BL/6J</strain>
    </source>
</reference>
<reference key="6">
    <citation type="journal article" date="2004" name="Genome Res.">
        <title>The status, quality, and expansion of the NIH full-length cDNA project: the Mammalian Gene Collection (MGC).</title>
        <authorList>
            <consortium name="The MGC Project Team"/>
        </authorList>
    </citation>
    <scope>NUCLEOTIDE SEQUENCE [LARGE SCALE MRNA]</scope>
    <source>
        <strain>FVB/N-3</strain>
        <tissue>Mammary tumor</tissue>
    </source>
</reference>
<reference key="7">
    <citation type="journal article" date="2007" name="J. Immunol.">
        <title>Dual assemblies of an activating immune receptor, MAIR-II, with ITAM-bearing adapters DAP12 and FcRgamma chain on peritoneal macrophages.</title>
        <authorList>
            <person name="Nakahashi C."/>
            <person name="Tahara-Hanaoka S."/>
            <person name="Totsuka N."/>
            <person name="Okoshi Y."/>
            <person name="Takai T."/>
            <person name="Ohkohchi N."/>
            <person name="Honda S."/>
            <person name="Shibuya K."/>
            <person name="Shibuya A."/>
        </authorList>
    </citation>
    <scope>FUNCTION</scope>
    <scope>INTERACTION WITH TYROBP AND FCR GAMMA</scope>
    <scope>MUTAGENESIS OF LYS-195</scope>
</reference>
<evidence type="ECO:0000255" key="1"/>
<evidence type="ECO:0000255" key="2">
    <source>
        <dbReference type="PROSITE-ProRule" id="PRU00114"/>
    </source>
</evidence>
<evidence type="ECO:0000256" key="3">
    <source>
        <dbReference type="SAM" id="MobiDB-lite"/>
    </source>
</evidence>
<evidence type="ECO:0000269" key="4">
    <source>
    </source>
</evidence>
<evidence type="ECO:0000269" key="5">
    <source>
    </source>
</evidence>
<evidence type="ECO:0000269" key="6">
    <source>
    </source>
</evidence>
<evidence type="ECO:0000269" key="7">
    <source>
    </source>
</evidence>
<evidence type="ECO:0000303" key="8">
    <source>
    </source>
</evidence>
<evidence type="ECO:0000303" key="9">
    <source>
    </source>
</evidence>
<evidence type="ECO:0000303" key="10">
    <source>
    </source>
</evidence>
<evidence type="ECO:0000303" key="11">
    <source>
    </source>
</evidence>
<evidence type="ECO:0000305" key="12"/>
<evidence type="ECO:0000312" key="13">
    <source>
        <dbReference type="MGI" id="MGI:2153249"/>
    </source>
</evidence>
<gene>
    <name evidence="13" type="primary">Cd300c2</name>
    <name type="synonym">Cd300c</name>
    <name evidence="11" type="synonym">Clm4</name>
    <name type="synonym">Igsf7</name>
    <name type="synonym">Lmir2</name>
</gene>
<sequence length="228" mass="25206">MIPRVIRLWLPSALFLSQVPGCVPLHGPSTITGAVGESLSVSCQYEEKFKTKDKFWCRGSLKVLCKDIVKTSSSEEVRNGRVTIRDHPDNLTFTVTYESLTLEDADTYMCAVDISLFDGSLGFDKYFKIELSVVPSEDPVTGSSLESGRDILESPTSSVGHTHPSVTTDDTIPAPCPQPRSLRSSLYFWVLVSLKLFLFLSMLGAVLWVNRPQRCSGGSSSRPCYENQ</sequence>